<dbReference type="EC" id="2.5.1.3" evidence="1"/>
<dbReference type="EMBL" id="BX548175">
    <property type="protein sequence ID" value="CAE20538.1"/>
    <property type="molecule type" value="Genomic_DNA"/>
</dbReference>
<dbReference type="RefSeq" id="WP_011129742.1">
    <property type="nucleotide sequence ID" value="NC_005071.1"/>
</dbReference>
<dbReference type="SMR" id="Q7V8I3"/>
<dbReference type="KEGG" id="pmt:PMT_0363"/>
<dbReference type="eggNOG" id="COG0352">
    <property type="taxonomic scope" value="Bacteria"/>
</dbReference>
<dbReference type="HOGENOM" id="CLU_064900_0_0_3"/>
<dbReference type="OrthoDB" id="9812206at2"/>
<dbReference type="UniPathway" id="UPA00060">
    <property type="reaction ID" value="UER00141"/>
</dbReference>
<dbReference type="Proteomes" id="UP000001423">
    <property type="component" value="Chromosome"/>
</dbReference>
<dbReference type="GO" id="GO:0005737">
    <property type="term" value="C:cytoplasm"/>
    <property type="evidence" value="ECO:0007669"/>
    <property type="project" value="TreeGrafter"/>
</dbReference>
<dbReference type="GO" id="GO:0000287">
    <property type="term" value="F:magnesium ion binding"/>
    <property type="evidence" value="ECO:0007669"/>
    <property type="project" value="UniProtKB-UniRule"/>
</dbReference>
<dbReference type="GO" id="GO:0004789">
    <property type="term" value="F:thiamine-phosphate diphosphorylase activity"/>
    <property type="evidence" value="ECO:0007669"/>
    <property type="project" value="UniProtKB-UniRule"/>
</dbReference>
<dbReference type="GO" id="GO:0009228">
    <property type="term" value="P:thiamine biosynthetic process"/>
    <property type="evidence" value="ECO:0007669"/>
    <property type="project" value="UniProtKB-KW"/>
</dbReference>
<dbReference type="GO" id="GO:0009229">
    <property type="term" value="P:thiamine diphosphate biosynthetic process"/>
    <property type="evidence" value="ECO:0007669"/>
    <property type="project" value="UniProtKB-UniRule"/>
</dbReference>
<dbReference type="CDD" id="cd00564">
    <property type="entry name" value="TMP_TenI"/>
    <property type="match status" value="1"/>
</dbReference>
<dbReference type="FunFam" id="3.20.20.70:FF:000096">
    <property type="entry name" value="Thiamine-phosphate synthase"/>
    <property type="match status" value="1"/>
</dbReference>
<dbReference type="Gene3D" id="3.20.20.70">
    <property type="entry name" value="Aldolase class I"/>
    <property type="match status" value="1"/>
</dbReference>
<dbReference type="HAMAP" id="MF_00097">
    <property type="entry name" value="TMP_synthase"/>
    <property type="match status" value="1"/>
</dbReference>
<dbReference type="HAMAP" id="MF_01327">
    <property type="entry name" value="TMP_synthase_cyanobact"/>
    <property type="match status" value="1"/>
</dbReference>
<dbReference type="InterPro" id="IPR013785">
    <property type="entry name" value="Aldolase_TIM"/>
</dbReference>
<dbReference type="InterPro" id="IPR036206">
    <property type="entry name" value="ThiamineP_synth_sf"/>
</dbReference>
<dbReference type="InterPro" id="IPR022998">
    <property type="entry name" value="ThiamineP_synth_TenI"/>
</dbReference>
<dbReference type="InterPro" id="IPR041397">
    <property type="entry name" value="ThiD2"/>
</dbReference>
<dbReference type="InterPro" id="IPR034291">
    <property type="entry name" value="TMP_synthase"/>
</dbReference>
<dbReference type="InterPro" id="IPR016229">
    <property type="entry name" value="TMP_synthase_cyanobac_bac"/>
</dbReference>
<dbReference type="NCBIfam" id="NF002727">
    <property type="entry name" value="PRK02615.1"/>
    <property type="match status" value="1"/>
</dbReference>
<dbReference type="NCBIfam" id="TIGR00693">
    <property type="entry name" value="thiE"/>
    <property type="match status" value="1"/>
</dbReference>
<dbReference type="PANTHER" id="PTHR20857">
    <property type="entry name" value="THIAMINE-PHOSPHATE PYROPHOSPHORYLASE"/>
    <property type="match status" value="1"/>
</dbReference>
<dbReference type="PANTHER" id="PTHR20857:SF15">
    <property type="entry name" value="THIAMINE-PHOSPHATE SYNTHASE"/>
    <property type="match status" value="1"/>
</dbReference>
<dbReference type="Pfam" id="PF17792">
    <property type="entry name" value="ThiD2"/>
    <property type="match status" value="1"/>
</dbReference>
<dbReference type="Pfam" id="PF02581">
    <property type="entry name" value="TMP-TENI"/>
    <property type="match status" value="1"/>
</dbReference>
<dbReference type="PIRSF" id="PIRSF000512">
    <property type="entry name" value="TMP_PPase_Cyanobac_prd"/>
    <property type="match status" value="1"/>
</dbReference>
<dbReference type="SUPFAM" id="SSF51391">
    <property type="entry name" value="Thiamin phosphate synthase"/>
    <property type="match status" value="1"/>
</dbReference>
<gene>
    <name evidence="1" type="primary">thiE</name>
    <name type="ordered locus">PMT_0363</name>
</gene>
<name>THIE_PROMM</name>
<evidence type="ECO:0000255" key="1">
    <source>
        <dbReference type="HAMAP-Rule" id="MF_01327"/>
    </source>
</evidence>
<feature type="chain" id="PRO_0000157081" description="Thiamine-phosphate synthase">
    <location>
        <begin position="1"/>
        <end position="353"/>
    </location>
</feature>
<feature type="region of interest" description="Unknown">
    <location>
        <begin position="1"/>
        <end position="128"/>
    </location>
</feature>
<feature type="region of interest" description="Thiamine-phosphate synthase">
    <location>
        <begin position="129"/>
        <end position="353"/>
    </location>
</feature>
<feature type="binding site" evidence="1">
    <location>
        <begin position="185"/>
        <end position="189"/>
    </location>
    <ligand>
        <name>4-amino-2-methyl-5-(diphosphooxymethyl)pyrimidine</name>
        <dbReference type="ChEBI" id="CHEBI:57841"/>
    </ligand>
</feature>
<feature type="binding site" evidence="1">
    <location>
        <position position="217"/>
    </location>
    <ligand>
        <name>4-amino-2-methyl-5-(diphosphooxymethyl)pyrimidine</name>
        <dbReference type="ChEBI" id="CHEBI:57841"/>
    </ligand>
</feature>
<feature type="binding site" evidence="1">
    <location>
        <position position="218"/>
    </location>
    <ligand>
        <name>Mg(2+)</name>
        <dbReference type="ChEBI" id="CHEBI:18420"/>
    </ligand>
</feature>
<feature type="binding site" evidence="1">
    <location>
        <position position="237"/>
    </location>
    <ligand>
        <name>Mg(2+)</name>
        <dbReference type="ChEBI" id="CHEBI:18420"/>
    </ligand>
</feature>
<feature type="binding site" evidence="1">
    <location>
        <position position="256"/>
    </location>
    <ligand>
        <name>4-amino-2-methyl-5-(diphosphooxymethyl)pyrimidine</name>
        <dbReference type="ChEBI" id="CHEBI:57841"/>
    </ligand>
</feature>
<feature type="binding site" evidence="1">
    <location>
        <begin position="282"/>
        <end position="284"/>
    </location>
    <ligand>
        <name>2-[(2R,5Z)-2-carboxy-4-methylthiazol-5(2H)-ylidene]ethyl phosphate</name>
        <dbReference type="ChEBI" id="CHEBI:62899"/>
    </ligand>
</feature>
<feature type="binding site" evidence="1">
    <location>
        <position position="285"/>
    </location>
    <ligand>
        <name>4-amino-2-methyl-5-(diphosphooxymethyl)pyrimidine</name>
        <dbReference type="ChEBI" id="CHEBI:57841"/>
    </ligand>
</feature>
<feature type="binding site" evidence="1">
    <location>
        <position position="312"/>
    </location>
    <ligand>
        <name>2-[(2R,5Z)-2-carboxy-4-methylthiazol-5(2H)-ylidene]ethyl phosphate</name>
        <dbReference type="ChEBI" id="CHEBI:62899"/>
    </ligand>
</feature>
<proteinExistence type="inferred from homology"/>
<reference key="1">
    <citation type="journal article" date="2003" name="Nature">
        <title>Genome divergence in two Prochlorococcus ecotypes reflects oceanic niche differentiation.</title>
        <authorList>
            <person name="Rocap G."/>
            <person name="Larimer F.W."/>
            <person name="Lamerdin J.E."/>
            <person name="Malfatti S."/>
            <person name="Chain P."/>
            <person name="Ahlgren N.A."/>
            <person name="Arellano A."/>
            <person name="Coleman M."/>
            <person name="Hauser L."/>
            <person name="Hess W.R."/>
            <person name="Johnson Z.I."/>
            <person name="Land M.L."/>
            <person name="Lindell D."/>
            <person name="Post A.F."/>
            <person name="Regala W."/>
            <person name="Shah M."/>
            <person name="Shaw S.L."/>
            <person name="Steglich C."/>
            <person name="Sullivan M.B."/>
            <person name="Ting C.S."/>
            <person name="Tolonen A."/>
            <person name="Webb E.A."/>
            <person name="Zinser E.R."/>
            <person name="Chisholm S.W."/>
        </authorList>
    </citation>
    <scope>NUCLEOTIDE SEQUENCE [LARGE SCALE GENOMIC DNA]</scope>
    <source>
        <strain>MIT 9313</strain>
    </source>
</reference>
<sequence length="353" mass="38986">MKSMPFAPIADLRVAQLIDANLDRAREGLRVVEDWCRFGLDREELVMTLKDWRQRLGRHHHDSYKQARSTATDQGIGLSHPAQQERHEPWHVVAANCARVQEALRVLEEFARQPDPQLAASAAAIRYGLYDLEVTVLQANAGKKRRQQLQDCHLCLITTSQSDLNSNDLLRTVNAALVAGIDMVQYRNKEASDLQRLTQAKELASLCRKHGALFIVNDRIDLALAVDADGVHLGQDDLPTDVARRLIGSERLLGRSTQFLAQLQKAEAEGCDYLGVGPVNSTATKPERQPIGLAYVKEASKATQLPWFAIGGINISNLEALRQAGAKRIAVIGAIMNSKDPAATSLQLLEALR</sequence>
<keyword id="KW-0460">Magnesium</keyword>
<keyword id="KW-0479">Metal-binding</keyword>
<keyword id="KW-1185">Reference proteome</keyword>
<keyword id="KW-0784">Thiamine biosynthesis</keyword>
<keyword id="KW-0808">Transferase</keyword>
<organism>
    <name type="scientific">Prochlorococcus marinus (strain MIT 9313)</name>
    <dbReference type="NCBI Taxonomy" id="74547"/>
    <lineage>
        <taxon>Bacteria</taxon>
        <taxon>Bacillati</taxon>
        <taxon>Cyanobacteriota</taxon>
        <taxon>Cyanophyceae</taxon>
        <taxon>Synechococcales</taxon>
        <taxon>Prochlorococcaceae</taxon>
        <taxon>Prochlorococcus</taxon>
    </lineage>
</organism>
<protein>
    <recommendedName>
        <fullName evidence="1">Thiamine-phosphate synthase</fullName>
        <shortName evidence="1">TP synthase</shortName>
        <shortName evidence="1">TPS</shortName>
        <ecNumber evidence="1">2.5.1.3</ecNumber>
    </recommendedName>
    <alternativeName>
        <fullName evidence="1">Thiamine-phosphate pyrophosphorylase</fullName>
        <shortName evidence="1">TMP pyrophosphorylase</shortName>
        <shortName evidence="1">TMP-PPase</shortName>
    </alternativeName>
</protein>
<accession>Q7V8I3</accession>
<comment type="function">
    <text evidence="1">Condenses 4-methyl-5-(beta-hydroxyethyl)thiazole monophosphate (THZ-P) and 2-methyl-4-amino-5-hydroxymethyl pyrimidine pyrophosphate (HMP-PP) to form thiamine monophosphate (TMP).</text>
</comment>
<comment type="catalytic activity">
    <reaction evidence="1">
        <text>2-[(2R,5Z)-2-carboxy-4-methylthiazol-5(2H)-ylidene]ethyl phosphate + 4-amino-2-methyl-5-(diphosphooxymethyl)pyrimidine + 2 H(+) = thiamine phosphate + CO2 + diphosphate</text>
        <dbReference type="Rhea" id="RHEA:47844"/>
        <dbReference type="ChEBI" id="CHEBI:15378"/>
        <dbReference type="ChEBI" id="CHEBI:16526"/>
        <dbReference type="ChEBI" id="CHEBI:33019"/>
        <dbReference type="ChEBI" id="CHEBI:37575"/>
        <dbReference type="ChEBI" id="CHEBI:57841"/>
        <dbReference type="ChEBI" id="CHEBI:62899"/>
        <dbReference type="EC" id="2.5.1.3"/>
    </reaction>
</comment>
<comment type="catalytic activity">
    <reaction evidence="1">
        <text>2-(2-carboxy-4-methylthiazol-5-yl)ethyl phosphate + 4-amino-2-methyl-5-(diphosphooxymethyl)pyrimidine + 2 H(+) = thiamine phosphate + CO2 + diphosphate</text>
        <dbReference type="Rhea" id="RHEA:47848"/>
        <dbReference type="ChEBI" id="CHEBI:15378"/>
        <dbReference type="ChEBI" id="CHEBI:16526"/>
        <dbReference type="ChEBI" id="CHEBI:33019"/>
        <dbReference type="ChEBI" id="CHEBI:37575"/>
        <dbReference type="ChEBI" id="CHEBI:57841"/>
        <dbReference type="ChEBI" id="CHEBI:62890"/>
        <dbReference type="EC" id="2.5.1.3"/>
    </reaction>
</comment>
<comment type="catalytic activity">
    <reaction evidence="1">
        <text>4-methyl-5-(2-phosphooxyethyl)-thiazole + 4-amino-2-methyl-5-(diphosphooxymethyl)pyrimidine + H(+) = thiamine phosphate + diphosphate</text>
        <dbReference type="Rhea" id="RHEA:22328"/>
        <dbReference type="ChEBI" id="CHEBI:15378"/>
        <dbReference type="ChEBI" id="CHEBI:33019"/>
        <dbReference type="ChEBI" id="CHEBI:37575"/>
        <dbReference type="ChEBI" id="CHEBI:57841"/>
        <dbReference type="ChEBI" id="CHEBI:58296"/>
        <dbReference type="EC" id="2.5.1.3"/>
    </reaction>
</comment>
<comment type="cofactor">
    <cofactor evidence="1">
        <name>Mg(2+)</name>
        <dbReference type="ChEBI" id="CHEBI:18420"/>
    </cofactor>
    <text evidence="1">Binds 1 Mg(2+) ion per subunit.</text>
</comment>
<comment type="pathway">
    <text evidence="1">Cofactor biosynthesis; thiamine diphosphate biosynthesis; thiamine phosphate from 4-amino-2-methyl-5-diphosphomethylpyrimidine and 4-methyl-5-(2-phosphoethyl)-thiazole: step 1/1.</text>
</comment>
<comment type="similarity">
    <text evidence="1">Belongs to the thiamine-phosphate synthase family.</text>
</comment>